<feature type="signal peptide" evidence="2">
    <location>
        <begin position="1"/>
        <end position="20"/>
    </location>
</feature>
<feature type="propeptide" id="PRO_0000401673" evidence="1">
    <location>
        <begin position="21"/>
        <end position="44"/>
    </location>
</feature>
<feature type="chain" id="PRO_0000401674" description="U3-lycotoxin-Ls1k">
    <location>
        <begin position="45"/>
        <end position="115"/>
    </location>
</feature>
<feature type="disulfide bond" evidence="1">
    <location>
        <begin position="48"/>
        <end position="63"/>
    </location>
</feature>
<feature type="disulfide bond" evidence="1">
    <location>
        <begin position="55"/>
        <end position="72"/>
    </location>
</feature>
<feature type="disulfide bond" evidence="1">
    <location>
        <begin position="62"/>
        <end position="87"/>
    </location>
</feature>
<feature type="disulfide bond" evidence="1">
    <location>
        <begin position="74"/>
        <end position="85"/>
    </location>
</feature>
<keyword id="KW-1015">Disulfide bond</keyword>
<keyword id="KW-0960">Knottin</keyword>
<keyword id="KW-0964">Secreted</keyword>
<keyword id="KW-0732">Signal</keyword>
<keyword id="KW-0800">Toxin</keyword>
<organism>
    <name type="scientific">Lycosa singoriensis</name>
    <name type="common">Wolf spider</name>
    <name type="synonym">Aranea singoriensis</name>
    <dbReference type="NCBI Taxonomy" id="434756"/>
    <lineage>
        <taxon>Eukaryota</taxon>
        <taxon>Metazoa</taxon>
        <taxon>Ecdysozoa</taxon>
        <taxon>Arthropoda</taxon>
        <taxon>Chelicerata</taxon>
        <taxon>Arachnida</taxon>
        <taxon>Araneae</taxon>
        <taxon>Araneomorphae</taxon>
        <taxon>Entelegynae</taxon>
        <taxon>Lycosoidea</taxon>
        <taxon>Lycosidae</taxon>
        <taxon>Lycosa</taxon>
    </lineage>
</organism>
<name>TX335_LYCSI</name>
<reference key="1">
    <citation type="journal article" date="2010" name="Zoology">
        <title>Transcriptome analysis of the venom glands of the Chinese wolf spider Lycosa singoriensis.</title>
        <authorList>
            <person name="Zhang Y."/>
            <person name="Chen J."/>
            <person name="Tang X."/>
            <person name="Wang F."/>
            <person name="Jiang L."/>
            <person name="Xiong X."/>
            <person name="Wang M."/>
            <person name="Rong M."/>
            <person name="Liu Z."/>
            <person name="Liang S."/>
        </authorList>
    </citation>
    <scope>NUCLEOTIDE SEQUENCE [LARGE SCALE MRNA]</scope>
    <source>
        <tissue>Venom gland</tissue>
    </source>
</reference>
<dbReference type="EMBL" id="EU926014">
    <property type="protein sequence ID" value="ACI41346.1"/>
    <property type="molecule type" value="mRNA"/>
</dbReference>
<dbReference type="EMBL" id="FM864018">
    <property type="protein sequence ID" value="CAS03616.1"/>
    <property type="molecule type" value="mRNA"/>
</dbReference>
<dbReference type="SMR" id="B6DCT0"/>
<dbReference type="ArachnoServer" id="AS000953">
    <property type="toxin name" value="U3-lycotoxin-Ls1k"/>
</dbReference>
<dbReference type="GO" id="GO:0005576">
    <property type="term" value="C:extracellular region"/>
    <property type="evidence" value="ECO:0007669"/>
    <property type="project" value="UniProtKB-SubCell"/>
</dbReference>
<dbReference type="GO" id="GO:0090729">
    <property type="term" value="F:toxin activity"/>
    <property type="evidence" value="ECO:0007669"/>
    <property type="project" value="UniProtKB-KW"/>
</dbReference>
<dbReference type="InterPro" id="IPR019553">
    <property type="entry name" value="Spider_toxin_CSTX_knottin"/>
</dbReference>
<dbReference type="InterPro" id="IPR011142">
    <property type="entry name" value="Spider_toxin_CSTX_Knottin_CS"/>
</dbReference>
<dbReference type="Pfam" id="PF10530">
    <property type="entry name" value="Toxin_35"/>
    <property type="match status" value="1"/>
</dbReference>
<dbReference type="PROSITE" id="PS60029">
    <property type="entry name" value="SPIDER_CSTX"/>
    <property type="match status" value="1"/>
</dbReference>
<accession>B6DCT0</accession>
<proteinExistence type="evidence at transcript level"/>
<comment type="subcellular location">
    <subcellularLocation>
        <location evidence="1">Secreted</location>
    </subcellularLocation>
</comment>
<comment type="tissue specificity">
    <text>Expressed by the venom gland.</text>
</comment>
<comment type="domain">
    <text evidence="1">The presence of a 'disulfide through disulfide knot' structurally defines this protein as a knottin.</text>
</comment>
<comment type="similarity">
    <text evidence="3">Belongs to the neurotoxin 19 (CSTX) family. 01 subfamily.</text>
</comment>
<protein>
    <recommendedName>
        <fullName>U3-lycotoxin-Ls1k</fullName>
    </recommendedName>
    <alternativeName>
        <fullName>Toxin-like structure LSTX-B35</fullName>
    </alternativeName>
</protein>
<evidence type="ECO:0000250" key="1"/>
<evidence type="ECO:0000255" key="2"/>
<evidence type="ECO:0000305" key="3"/>
<sequence>MKSVLLFGVLLVTLFSYSSAEMLDDFDQADEDELLSLIEKEEARAKECTPRFYDCSHDRHSCCRSELFKDVCTCFYPEGGDNEVCTCQQPKHLKYMEKAAGKAKKFGGKIKKWFG</sequence>